<sequence length="361" mass="40429">MTVSTAQMRFWSPEVRELEPYVPGEQPKIQNLLKLNTNENPYPPSPKVVEAVQAVLHEQADALRLYPDPDATALKQAIAKQQNIDVSQVFVGNGSDEVLAHIFKAFFLQDEPILYPDITYSFYPVYSQFFGTKTKEIPLNESFEIDVRDYTQPNGGVIITNPNAPTSIALSLAEIEQVLQANPDRVVVIDEAYVDFGAESAVSLINRYENLVVCQTTSKSRSLAGLRVGFAIAQSHLIAALEAVKNSFNSYPIDRFAIAAAVASFEDQAYFEEQCQKVITSREKLVRDLTELGFNVLPSKANFIFATHSQHDAGQLAQKLREQGIIVRYFNKPRINQFLRITVGTDEQNARLVQTLKQDIL</sequence>
<protein>
    <recommendedName>
        <fullName evidence="1">Histidinol-phosphate aminotransferase</fullName>
        <ecNumber evidence="1">2.6.1.9</ecNumber>
    </recommendedName>
    <alternativeName>
        <fullName evidence="1">Imidazole acetol-phosphate transaminase</fullName>
    </alternativeName>
</protein>
<name>HIS8_ACIB3</name>
<organism>
    <name type="scientific">Acinetobacter baumannii (strain AB307-0294)</name>
    <dbReference type="NCBI Taxonomy" id="557600"/>
    <lineage>
        <taxon>Bacteria</taxon>
        <taxon>Pseudomonadati</taxon>
        <taxon>Pseudomonadota</taxon>
        <taxon>Gammaproteobacteria</taxon>
        <taxon>Moraxellales</taxon>
        <taxon>Moraxellaceae</taxon>
        <taxon>Acinetobacter</taxon>
        <taxon>Acinetobacter calcoaceticus/baumannii complex</taxon>
    </lineage>
</organism>
<dbReference type="EC" id="2.6.1.9" evidence="1"/>
<dbReference type="EMBL" id="CP001172">
    <property type="protein sequence ID" value="ACJ59411.1"/>
    <property type="molecule type" value="Genomic_DNA"/>
</dbReference>
<dbReference type="RefSeq" id="WP_000218880.1">
    <property type="nucleotide sequence ID" value="NZ_CP001172.1"/>
</dbReference>
<dbReference type="SMR" id="B7GZI3"/>
<dbReference type="HOGENOM" id="CLU_017584_3_0_6"/>
<dbReference type="UniPathway" id="UPA00031">
    <property type="reaction ID" value="UER00012"/>
</dbReference>
<dbReference type="Proteomes" id="UP000006924">
    <property type="component" value="Chromosome"/>
</dbReference>
<dbReference type="GO" id="GO:0004400">
    <property type="term" value="F:histidinol-phosphate transaminase activity"/>
    <property type="evidence" value="ECO:0007669"/>
    <property type="project" value="UniProtKB-UniRule"/>
</dbReference>
<dbReference type="GO" id="GO:0030170">
    <property type="term" value="F:pyridoxal phosphate binding"/>
    <property type="evidence" value="ECO:0007669"/>
    <property type="project" value="InterPro"/>
</dbReference>
<dbReference type="GO" id="GO:0000105">
    <property type="term" value="P:L-histidine biosynthetic process"/>
    <property type="evidence" value="ECO:0007669"/>
    <property type="project" value="UniProtKB-UniRule"/>
</dbReference>
<dbReference type="CDD" id="cd00609">
    <property type="entry name" value="AAT_like"/>
    <property type="match status" value="1"/>
</dbReference>
<dbReference type="Gene3D" id="3.90.1150.10">
    <property type="entry name" value="Aspartate Aminotransferase, domain 1"/>
    <property type="match status" value="1"/>
</dbReference>
<dbReference type="Gene3D" id="3.40.640.10">
    <property type="entry name" value="Type I PLP-dependent aspartate aminotransferase-like (Major domain)"/>
    <property type="match status" value="1"/>
</dbReference>
<dbReference type="HAMAP" id="MF_01023">
    <property type="entry name" value="HisC_aminotrans_2"/>
    <property type="match status" value="1"/>
</dbReference>
<dbReference type="InterPro" id="IPR004839">
    <property type="entry name" value="Aminotransferase_I/II_large"/>
</dbReference>
<dbReference type="InterPro" id="IPR005861">
    <property type="entry name" value="HisP_aminotrans"/>
</dbReference>
<dbReference type="InterPro" id="IPR050106">
    <property type="entry name" value="HistidinolP_aminotransfase"/>
</dbReference>
<dbReference type="InterPro" id="IPR015424">
    <property type="entry name" value="PyrdxlP-dep_Trfase"/>
</dbReference>
<dbReference type="InterPro" id="IPR015421">
    <property type="entry name" value="PyrdxlP-dep_Trfase_major"/>
</dbReference>
<dbReference type="InterPro" id="IPR015422">
    <property type="entry name" value="PyrdxlP-dep_Trfase_small"/>
</dbReference>
<dbReference type="NCBIfam" id="TIGR01141">
    <property type="entry name" value="hisC"/>
    <property type="match status" value="1"/>
</dbReference>
<dbReference type="PANTHER" id="PTHR43643:SF3">
    <property type="entry name" value="HISTIDINOL-PHOSPHATE AMINOTRANSFERASE"/>
    <property type="match status" value="1"/>
</dbReference>
<dbReference type="PANTHER" id="PTHR43643">
    <property type="entry name" value="HISTIDINOL-PHOSPHATE AMINOTRANSFERASE 2"/>
    <property type="match status" value="1"/>
</dbReference>
<dbReference type="Pfam" id="PF00155">
    <property type="entry name" value="Aminotran_1_2"/>
    <property type="match status" value="1"/>
</dbReference>
<dbReference type="SUPFAM" id="SSF53383">
    <property type="entry name" value="PLP-dependent transferases"/>
    <property type="match status" value="1"/>
</dbReference>
<reference key="1">
    <citation type="journal article" date="2008" name="J. Bacteriol.">
        <title>Comparative genome sequence analysis of multidrug-resistant Acinetobacter baumannii.</title>
        <authorList>
            <person name="Adams M.D."/>
            <person name="Goglin K."/>
            <person name="Molyneaux N."/>
            <person name="Hujer K.M."/>
            <person name="Lavender H."/>
            <person name="Jamison J.J."/>
            <person name="MacDonald I.J."/>
            <person name="Martin K.M."/>
            <person name="Russo T."/>
            <person name="Campagnari A.A."/>
            <person name="Hujer A.M."/>
            <person name="Bonomo R.A."/>
            <person name="Gill S.R."/>
        </authorList>
    </citation>
    <scope>NUCLEOTIDE SEQUENCE [LARGE SCALE GENOMIC DNA]</scope>
    <source>
        <strain>AB307-0294</strain>
    </source>
</reference>
<gene>
    <name evidence="1" type="primary">hisC</name>
    <name type="ordered locus">ABBFA_002928</name>
</gene>
<feature type="chain" id="PRO_1000135376" description="Histidinol-phosphate aminotransferase">
    <location>
        <begin position="1"/>
        <end position="361"/>
    </location>
</feature>
<feature type="modified residue" description="N6-(pyridoxal phosphate)lysine" evidence="1">
    <location>
        <position position="219"/>
    </location>
</feature>
<accession>B7GZI3</accession>
<evidence type="ECO:0000255" key="1">
    <source>
        <dbReference type="HAMAP-Rule" id="MF_01023"/>
    </source>
</evidence>
<comment type="catalytic activity">
    <reaction evidence="1">
        <text>L-histidinol phosphate + 2-oxoglutarate = 3-(imidazol-4-yl)-2-oxopropyl phosphate + L-glutamate</text>
        <dbReference type="Rhea" id="RHEA:23744"/>
        <dbReference type="ChEBI" id="CHEBI:16810"/>
        <dbReference type="ChEBI" id="CHEBI:29985"/>
        <dbReference type="ChEBI" id="CHEBI:57766"/>
        <dbReference type="ChEBI" id="CHEBI:57980"/>
        <dbReference type="EC" id="2.6.1.9"/>
    </reaction>
</comment>
<comment type="cofactor">
    <cofactor evidence="1">
        <name>pyridoxal 5'-phosphate</name>
        <dbReference type="ChEBI" id="CHEBI:597326"/>
    </cofactor>
</comment>
<comment type="pathway">
    <text evidence="1">Amino-acid biosynthesis; L-histidine biosynthesis; L-histidine from 5-phospho-alpha-D-ribose 1-diphosphate: step 7/9.</text>
</comment>
<comment type="subunit">
    <text evidence="1">Homodimer.</text>
</comment>
<comment type="similarity">
    <text evidence="1">Belongs to the class-II pyridoxal-phosphate-dependent aminotransferase family. Histidinol-phosphate aminotransferase subfamily.</text>
</comment>
<keyword id="KW-0028">Amino-acid biosynthesis</keyword>
<keyword id="KW-0032">Aminotransferase</keyword>
<keyword id="KW-0368">Histidine biosynthesis</keyword>
<keyword id="KW-0663">Pyridoxal phosphate</keyword>
<keyword id="KW-0808">Transferase</keyword>
<proteinExistence type="inferred from homology"/>